<name>LSRA_ECOHS</name>
<gene>
    <name type="primary">lsrA</name>
    <name type="ordered locus">EcHS_A1595</name>
</gene>
<dbReference type="EC" id="7.6.2.13" evidence="1"/>
<dbReference type="EMBL" id="CP000802">
    <property type="protein sequence ID" value="ABV05920.1"/>
    <property type="molecule type" value="Genomic_DNA"/>
</dbReference>
<dbReference type="RefSeq" id="WP_001194891.1">
    <property type="nucleotide sequence ID" value="NC_009800.1"/>
</dbReference>
<dbReference type="SMR" id="A8A066"/>
<dbReference type="KEGG" id="ecx:EcHS_A1595"/>
<dbReference type="HOGENOM" id="CLU_000604_92_3_6"/>
<dbReference type="GO" id="GO:0005886">
    <property type="term" value="C:plasma membrane"/>
    <property type="evidence" value="ECO:0007669"/>
    <property type="project" value="UniProtKB-SubCell"/>
</dbReference>
<dbReference type="GO" id="GO:0005524">
    <property type="term" value="F:ATP binding"/>
    <property type="evidence" value="ECO:0007669"/>
    <property type="project" value="UniProtKB-KW"/>
</dbReference>
<dbReference type="GO" id="GO:0016887">
    <property type="term" value="F:ATP hydrolysis activity"/>
    <property type="evidence" value="ECO:0007669"/>
    <property type="project" value="InterPro"/>
</dbReference>
<dbReference type="CDD" id="cd03216">
    <property type="entry name" value="ABC_Carb_Monos_I"/>
    <property type="match status" value="1"/>
</dbReference>
<dbReference type="CDD" id="cd03215">
    <property type="entry name" value="ABC_Carb_Monos_II"/>
    <property type="match status" value="1"/>
</dbReference>
<dbReference type="Gene3D" id="3.40.50.300">
    <property type="entry name" value="P-loop containing nucleotide triphosphate hydrolases"/>
    <property type="match status" value="2"/>
</dbReference>
<dbReference type="InterPro" id="IPR003593">
    <property type="entry name" value="AAA+_ATPase"/>
</dbReference>
<dbReference type="InterPro" id="IPR050107">
    <property type="entry name" value="ABC_carbohydrate_import_ATPase"/>
</dbReference>
<dbReference type="InterPro" id="IPR003439">
    <property type="entry name" value="ABC_transporter-like_ATP-bd"/>
</dbReference>
<dbReference type="InterPro" id="IPR017871">
    <property type="entry name" value="ABC_transporter-like_CS"/>
</dbReference>
<dbReference type="InterPro" id="IPR027417">
    <property type="entry name" value="P-loop_NTPase"/>
</dbReference>
<dbReference type="NCBIfam" id="NF011967">
    <property type="entry name" value="PRK15439.1"/>
    <property type="match status" value="1"/>
</dbReference>
<dbReference type="PANTHER" id="PTHR43790:SF2">
    <property type="entry name" value="AUTOINDUCER 2 IMPORT ATP-BINDING PROTEIN LSRA"/>
    <property type="match status" value="1"/>
</dbReference>
<dbReference type="PANTHER" id="PTHR43790">
    <property type="entry name" value="CARBOHYDRATE TRANSPORT ATP-BINDING PROTEIN MG119-RELATED"/>
    <property type="match status" value="1"/>
</dbReference>
<dbReference type="Pfam" id="PF00005">
    <property type="entry name" value="ABC_tran"/>
    <property type="match status" value="2"/>
</dbReference>
<dbReference type="SMART" id="SM00382">
    <property type="entry name" value="AAA"/>
    <property type="match status" value="2"/>
</dbReference>
<dbReference type="SUPFAM" id="SSF52540">
    <property type="entry name" value="P-loop containing nucleoside triphosphate hydrolases"/>
    <property type="match status" value="2"/>
</dbReference>
<dbReference type="PROSITE" id="PS00211">
    <property type="entry name" value="ABC_TRANSPORTER_1"/>
    <property type="match status" value="1"/>
</dbReference>
<dbReference type="PROSITE" id="PS50893">
    <property type="entry name" value="ABC_TRANSPORTER_2"/>
    <property type="match status" value="2"/>
</dbReference>
<accession>A8A066</accession>
<proteinExistence type="inferred from homology"/>
<reference key="1">
    <citation type="journal article" date="2008" name="J. Bacteriol.">
        <title>The pangenome structure of Escherichia coli: comparative genomic analysis of E. coli commensal and pathogenic isolates.</title>
        <authorList>
            <person name="Rasko D.A."/>
            <person name="Rosovitz M.J."/>
            <person name="Myers G.S.A."/>
            <person name="Mongodin E.F."/>
            <person name="Fricke W.F."/>
            <person name="Gajer P."/>
            <person name="Crabtree J."/>
            <person name="Sebaihia M."/>
            <person name="Thomson N.R."/>
            <person name="Chaudhuri R."/>
            <person name="Henderson I.R."/>
            <person name="Sperandio V."/>
            <person name="Ravel J."/>
        </authorList>
    </citation>
    <scope>NUCLEOTIDE SEQUENCE [LARGE SCALE GENOMIC DNA]</scope>
    <source>
        <strain>HS</strain>
    </source>
</reference>
<protein>
    <recommendedName>
        <fullName evidence="1">Autoinducer 2 import ATP-binding protein LsrA</fullName>
        <shortName evidence="1">AI-2 import ATP-binding protein LsrA</shortName>
        <ecNumber evidence="1">7.6.2.13</ecNumber>
    </recommendedName>
</protein>
<comment type="function">
    <text evidence="1">Part of the ABC transporter complex LsrABCD involved in autoinducer 2 (AI-2) import. Responsible for energy coupling to the transport system.</text>
</comment>
<comment type="catalytic activity">
    <reaction evidence="1">
        <text>ATP + H2O + (2R,4S)-2-methyl-2,3,3,4-tetrahydroxytetrahydrofuran-[AI-2-binding protein]Side 1 = ADP + phosphate + (2R,4S)-2-methyl-2,3,3,4-tetrahydroxytetrahydrofuranSide 2 + [AI-2-binding protein]Side 1.</text>
        <dbReference type="EC" id="7.6.2.13"/>
    </reaction>
</comment>
<comment type="subunit">
    <text evidence="1">The complex is composed of two ATP-binding proteins (LsrA), two transmembrane proteins (LsrC and LsrD) and a solute-binding protein (LsrB).</text>
</comment>
<comment type="subcellular location">
    <subcellularLocation>
        <location evidence="1">Cell inner membrane</location>
        <topology evidence="1">Peripheral membrane protein</topology>
    </subcellularLocation>
</comment>
<comment type="similarity">
    <text evidence="3">Belongs to the ABC transporter superfamily. AI-2 autoinducer porter (TC 3.A.1.2.8) family.</text>
</comment>
<evidence type="ECO:0000250" key="1">
    <source>
        <dbReference type="UniProtKB" id="P77257"/>
    </source>
</evidence>
<evidence type="ECO:0000255" key="2">
    <source>
        <dbReference type="PROSITE-ProRule" id="PRU00434"/>
    </source>
</evidence>
<evidence type="ECO:0000305" key="3"/>
<sequence length="511" mass="55637">MQTSDTRALPLLCARSVYKQYSGVNVLKGIDFTLHQGEVHALLGGNGAGKSTLMKIIAGITPADSGTLEIGGNNYARLTPVHAHQLGIYLVPQEPLLFSSLSIKENILFGLAKKQLSMQKMKNLLAALGCQFDLHSLAGSLDVADRQMVEILRGLMRDSRILILDEPTASLTPAETERLFTRLQELLATGVGIVFISHKLPEIRQIADRISVMRDGTIALSGKTSELSTDDIIQAITPVVREKSLSASQKLWLELPGNRPQHAAGTPVLTLENLTGEGFRNVSLTLNAGEILGLAGLVGAGRTELAETLYGLRTLRGGRIMLNGNEINKLSTGERLLRGLVYLPEDRQSSGLNLDASLAWNVCALTHNLRGFWAKTAKDNATLERYRRALNIKFNQPEQAARTLSGGNQQKILIAKCLEASPQVLIVDEPTRGVDVSARNDIYQLLRSIAAQNVAVLLISSDLEEIELMADRVYVMHQGEIAHSALTGRDINVETIMRVAFGDSQRQEASC</sequence>
<organism>
    <name type="scientific">Escherichia coli O9:H4 (strain HS)</name>
    <dbReference type="NCBI Taxonomy" id="331112"/>
    <lineage>
        <taxon>Bacteria</taxon>
        <taxon>Pseudomonadati</taxon>
        <taxon>Pseudomonadota</taxon>
        <taxon>Gammaproteobacteria</taxon>
        <taxon>Enterobacterales</taxon>
        <taxon>Enterobacteriaceae</taxon>
        <taxon>Escherichia</taxon>
    </lineage>
</organism>
<feature type="chain" id="PRO_0000351295" description="Autoinducer 2 import ATP-binding protein LsrA">
    <location>
        <begin position="1"/>
        <end position="511"/>
    </location>
</feature>
<feature type="domain" description="ABC transporter 1" evidence="2">
    <location>
        <begin position="12"/>
        <end position="240"/>
    </location>
</feature>
<feature type="domain" description="ABC transporter 2" evidence="2">
    <location>
        <begin position="240"/>
        <end position="503"/>
    </location>
</feature>
<feature type="binding site" evidence="2">
    <location>
        <begin position="44"/>
        <end position="51"/>
    </location>
    <ligand>
        <name>ATP</name>
        <dbReference type="ChEBI" id="CHEBI:30616"/>
    </ligand>
</feature>
<keyword id="KW-0067">ATP-binding</keyword>
<keyword id="KW-0997">Cell inner membrane</keyword>
<keyword id="KW-1003">Cell membrane</keyword>
<keyword id="KW-0472">Membrane</keyword>
<keyword id="KW-0547">Nucleotide-binding</keyword>
<keyword id="KW-0677">Repeat</keyword>
<keyword id="KW-1278">Translocase</keyword>
<keyword id="KW-0813">Transport</keyword>